<feature type="chain" id="PRO_0000183556" description="Cytochrome c oxidase subunit 2">
    <location>
        <begin position="1"/>
        <end position="227"/>
    </location>
</feature>
<feature type="topological domain" description="Mitochondrial intermembrane" evidence="3">
    <location>
        <begin position="1"/>
        <end position="14"/>
    </location>
</feature>
<feature type="transmembrane region" description="Helical; Name=I" evidence="3">
    <location>
        <begin position="15"/>
        <end position="45"/>
    </location>
</feature>
<feature type="topological domain" description="Mitochondrial matrix" evidence="3">
    <location>
        <begin position="46"/>
        <end position="59"/>
    </location>
</feature>
<feature type="transmembrane region" description="Helical; Name=II" evidence="3">
    <location>
        <begin position="60"/>
        <end position="87"/>
    </location>
</feature>
<feature type="topological domain" description="Mitochondrial intermembrane" evidence="3">
    <location>
        <begin position="88"/>
        <end position="227"/>
    </location>
</feature>
<feature type="binding site" evidence="3">
    <location>
        <position position="161"/>
    </location>
    <ligand>
        <name>Cu cation</name>
        <dbReference type="ChEBI" id="CHEBI:23378"/>
        <label>A1</label>
    </ligand>
</feature>
<feature type="binding site" evidence="3">
    <location>
        <position position="196"/>
    </location>
    <ligand>
        <name>Cu cation</name>
        <dbReference type="ChEBI" id="CHEBI:23378"/>
        <label>A1</label>
    </ligand>
</feature>
<feature type="binding site" evidence="3">
    <location>
        <position position="196"/>
    </location>
    <ligand>
        <name>Cu cation</name>
        <dbReference type="ChEBI" id="CHEBI:23378"/>
        <label>A2</label>
    </ligand>
</feature>
<feature type="binding site" evidence="3">
    <location>
        <position position="198"/>
    </location>
    <ligand>
        <name>Cu cation</name>
        <dbReference type="ChEBI" id="CHEBI:23378"/>
        <label>A2</label>
    </ligand>
</feature>
<feature type="binding site" evidence="3">
    <location>
        <position position="198"/>
    </location>
    <ligand>
        <name>Mg(2+)</name>
        <dbReference type="ChEBI" id="CHEBI:18420"/>
        <note>ligand shared with MT-CO1</note>
    </ligand>
</feature>
<feature type="binding site" evidence="3">
    <location>
        <position position="200"/>
    </location>
    <ligand>
        <name>Cu cation</name>
        <dbReference type="ChEBI" id="CHEBI:23378"/>
        <label>A1</label>
    </ligand>
</feature>
<feature type="binding site" evidence="3">
    <location>
        <position position="200"/>
    </location>
    <ligand>
        <name>Cu cation</name>
        <dbReference type="ChEBI" id="CHEBI:23378"/>
        <label>A2</label>
    </ligand>
</feature>
<feature type="binding site" evidence="3">
    <location>
        <position position="204"/>
    </location>
    <ligand>
        <name>Cu cation</name>
        <dbReference type="ChEBI" id="CHEBI:23378"/>
        <label>A2</label>
    </ligand>
</feature>
<feature type="binding site" evidence="3">
    <location>
        <position position="207"/>
    </location>
    <ligand>
        <name>Cu cation</name>
        <dbReference type="ChEBI" id="CHEBI:23378"/>
        <label>A1</label>
    </ligand>
</feature>
<reference key="1">
    <citation type="journal article" date="1995" name="J. Mol. Evol.">
        <title>Mammalian mitochondrial DNA evolution: a comparison of the cytochrome b and cytochrome c oxidase II genes.</title>
        <authorList>
            <person name="Honeycutt R.L."/>
            <person name="Nedbal M.A."/>
            <person name="Adkins R.M."/>
            <person name="Janecek L.L."/>
        </authorList>
    </citation>
    <scope>NUCLEOTIDE SEQUENCE [GENOMIC DNA]</scope>
</reference>
<geneLocation type="mitochondrion"/>
<sequence length="227" mass="25890">MAYPMQLGLQDATSPIMEELTDFHDHTLMIVFLISTLVLYIISMMLTTKLTHTSTMDAQEVETIWTVLPAVILVMIALPSLRILYMMDEINDPYLTVKTMGHQWYWSYEYTDYEDLMFDSYMIATSDLKPGEFRLLEVDNRVVLPMELPIRMLVSSEDVLHSWAVPSLGLKTDAIPGRLNQATLVSSRPGLFYGQCSEICGANHSFMPIVLEMVPLKQFESWASSMT</sequence>
<proteinExistence type="inferred from homology"/>
<keyword id="KW-0186">Copper</keyword>
<keyword id="KW-0249">Electron transport</keyword>
<keyword id="KW-0460">Magnesium</keyword>
<keyword id="KW-0472">Membrane</keyword>
<keyword id="KW-0479">Metal-binding</keyword>
<keyword id="KW-0496">Mitochondrion</keyword>
<keyword id="KW-0999">Mitochondrion inner membrane</keyword>
<keyword id="KW-0679">Respiratory chain</keyword>
<keyword id="KW-1278">Translocase</keyword>
<keyword id="KW-0812">Transmembrane</keyword>
<keyword id="KW-1133">Transmembrane helix</keyword>
<keyword id="KW-0813">Transport</keyword>
<comment type="function">
    <text evidence="2">Component of the cytochrome c oxidase, the last enzyme in the mitochondrial electron transport chain which drives oxidative phosphorylation. The respiratory chain contains 3 multisubunit complexes succinate dehydrogenase (complex II, CII), ubiquinol-cytochrome c oxidoreductase (cytochrome b-c1 complex, complex III, CIII) and cytochrome c oxidase (complex IV, CIV), that cooperate to transfer electrons derived from NADH and succinate to molecular oxygen, creating an electrochemical gradient over the inner membrane that drives transmembrane transport and the ATP synthase. Cytochrome c oxidase is the component of the respiratory chain that catalyzes the reduction of oxygen to water. Electrons originating from reduced cytochrome c in the intermembrane space (IMS) are transferred via the dinuclear copper A center (CU(A)) of subunit 2 and heme A of subunit 1 to the active site in subunit 1, a binuclear center (BNC) formed by heme A3 and copper B (CU(B)). The BNC reduces molecular oxygen to 2 water molecules using 4 electrons from cytochrome c in the IMS and 4 protons from the mitochondrial matrix.</text>
</comment>
<comment type="catalytic activity">
    <reaction evidence="2">
        <text>4 Fe(II)-[cytochrome c] + O2 + 8 H(+)(in) = 4 Fe(III)-[cytochrome c] + 2 H2O + 4 H(+)(out)</text>
        <dbReference type="Rhea" id="RHEA:11436"/>
        <dbReference type="Rhea" id="RHEA-COMP:10350"/>
        <dbReference type="Rhea" id="RHEA-COMP:14399"/>
        <dbReference type="ChEBI" id="CHEBI:15377"/>
        <dbReference type="ChEBI" id="CHEBI:15378"/>
        <dbReference type="ChEBI" id="CHEBI:15379"/>
        <dbReference type="ChEBI" id="CHEBI:29033"/>
        <dbReference type="ChEBI" id="CHEBI:29034"/>
        <dbReference type="EC" id="7.1.1.9"/>
    </reaction>
    <physiologicalReaction direction="left-to-right" evidence="2">
        <dbReference type="Rhea" id="RHEA:11437"/>
    </physiologicalReaction>
</comment>
<comment type="cofactor">
    <cofactor evidence="3">
        <name>Cu cation</name>
        <dbReference type="ChEBI" id="CHEBI:23378"/>
    </cofactor>
    <text evidence="3">Binds a dinuclear copper A center per subunit.</text>
</comment>
<comment type="subunit">
    <text evidence="1 3">Component of the cytochrome c oxidase (complex IV, CIV), a multisubunit enzyme composed of 14 subunits. The complex is composed of a catalytic core of 3 subunits MT-CO1, MT-CO2 and MT-CO3, encoded in the mitochondrial DNA, and 11 supernumerary subunits COX4I, COX5A, COX5B, COX6A, COX6B, COX6C, COX7A, COX7B, COX7C, COX8 and NDUFA4, which are encoded in the nuclear genome. The complex exists as a monomer or a dimer and forms supercomplexes (SCs) in the inner mitochondrial membrane with NADH-ubiquinone oxidoreductase (complex I, CI) and ubiquinol-cytochrome c oxidoreductase (cytochrome b-c1 complex, complex III, CIII), resulting in different assemblies (supercomplex SCI(1)III(2)IV(1) and megacomplex MCI(2)III(2)IV(2)) (By similarity). Found in a complex with TMEM177, COA6, COX18, COX20, SCO1 and SCO2. Interacts with TMEM177 in a COX20-dependent manner. Interacts with COX20. Interacts with COX16 (By similarity).</text>
</comment>
<comment type="subcellular location">
    <subcellularLocation>
        <location evidence="3">Mitochondrion inner membrane</location>
        <topology evidence="3">Multi-pass membrane protein</topology>
    </subcellularLocation>
</comment>
<comment type="similarity">
    <text evidence="4">Belongs to the cytochrome c oxidase subunit 2 family.</text>
</comment>
<gene>
    <name type="primary">MT-CO2</name>
    <name type="synonym">COII</name>
    <name type="synonym">COXII</name>
    <name type="synonym">MTCO2</name>
</gene>
<dbReference type="EC" id="7.1.1.9"/>
<dbReference type="EMBL" id="U18829">
    <property type="protein sequence ID" value="AAA75612.1"/>
    <property type="molecule type" value="Genomic_DNA"/>
</dbReference>
<dbReference type="SMR" id="P50685"/>
<dbReference type="GO" id="GO:0005743">
    <property type="term" value="C:mitochondrial inner membrane"/>
    <property type="evidence" value="ECO:0007669"/>
    <property type="project" value="UniProtKB-SubCell"/>
</dbReference>
<dbReference type="GO" id="GO:0045277">
    <property type="term" value="C:respiratory chain complex IV"/>
    <property type="evidence" value="ECO:0000250"/>
    <property type="project" value="UniProtKB"/>
</dbReference>
<dbReference type="GO" id="GO:0005507">
    <property type="term" value="F:copper ion binding"/>
    <property type="evidence" value="ECO:0007669"/>
    <property type="project" value="InterPro"/>
</dbReference>
<dbReference type="GO" id="GO:0004129">
    <property type="term" value="F:cytochrome-c oxidase activity"/>
    <property type="evidence" value="ECO:0007669"/>
    <property type="project" value="UniProtKB-EC"/>
</dbReference>
<dbReference type="GO" id="GO:0042773">
    <property type="term" value="P:ATP synthesis coupled electron transport"/>
    <property type="evidence" value="ECO:0007669"/>
    <property type="project" value="TreeGrafter"/>
</dbReference>
<dbReference type="CDD" id="cd13912">
    <property type="entry name" value="CcO_II_C"/>
    <property type="match status" value="1"/>
</dbReference>
<dbReference type="FunFam" id="1.10.287.90:FF:000001">
    <property type="entry name" value="Cytochrome c oxidase subunit 2"/>
    <property type="match status" value="1"/>
</dbReference>
<dbReference type="FunFam" id="2.60.40.420:FF:000001">
    <property type="entry name" value="Cytochrome c oxidase subunit 2"/>
    <property type="match status" value="1"/>
</dbReference>
<dbReference type="Gene3D" id="1.10.287.90">
    <property type="match status" value="1"/>
</dbReference>
<dbReference type="Gene3D" id="2.60.40.420">
    <property type="entry name" value="Cupredoxins - blue copper proteins"/>
    <property type="match status" value="1"/>
</dbReference>
<dbReference type="InterPro" id="IPR045187">
    <property type="entry name" value="CcO_II"/>
</dbReference>
<dbReference type="InterPro" id="IPR002429">
    <property type="entry name" value="CcO_II-like_C"/>
</dbReference>
<dbReference type="InterPro" id="IPR034210">
    <property type="entry name" value="CcO_II_C"/>
</dbReference>
<dbReference type="InterPro" id="IPR001505">
    <property type="entry name" value="Copper_CuA"/>
</dbReference>
<dbReference type="InterPro" id="IPR008972">
    <property type="entry name" value="Cupredoxin"/>
</dbReference>
<dbReference type="InterPro" id="IPR014222">
    <property type="entry name" value="Cyt_c_oxidase_su2"/>
</dbReference>
<dbReference type="InterPro" id="IPR011759">
    <property type="entry name" value="Cyt_c_oxidase_su2_TM_dom"/>
</dbReference>
<dbReference type="InterPro" id="IPR036257">
    <property type="entry name" value="Cyt_c_oxidase_su2_TM_sf"/>
</dbReference>
<dbReference type="NCBIfam" id="TIGR02866">
    <property type="entry name" value="CoxB"/>
    <property type="match status" value="1"/>
</dbReference>
<dbReference type="PANTHER" id="PTHR22888:SF9">
    <property type="entry name" value="CYTOCHROME C OXIDASE SUBUNIT 2"/>
    <property type="match status" value="1"/>
</dbReference>
<dbReference type="PANTHER" id="PTHR22888">
    <property type="entry name" value="CYTOCHROME C OXIDASE, SUBUNIT II"/>
    <property type="match status" value="1"/>
</dbReference>
<dbReference type="Pfam" id="PF00116">
    <property type="entry name" value="COX2"/>
    <property type="match status" value="1"/>
</dbReference>
<dbReference type="Pfam" id="PF02790">
    <property type="entry name" value="COX2_TM"/>
    <property type="match status" value="1"/>
</dbReference>
<dbReference type="PRINTS" id="PR01166">
    <property type="entry name" value="CYCOXIDASEII"/>
</dbReference>
<dbReference type="SUPFAM" id="SSF49503">
    <property type="entry name" value="Cupredoxins"/>
    <property type="match status" value="1"/>
</dbReference>
<dbReference type="SUPFAM" id="SSF81464">
    <property type="entry name" value="Cytochrome c oxidase subunit II-like, transmembrane region"/>
    <property type="match status" value="1"/>
</dbReference>
<dbReference type="PROSITE" id="PS00078">
    <property type="entry name" value="COX2"/>
    <property type="match status" value="1"/>
</dbReference>
<dbReference type="PROSITE" id="PS50857">
    <property type="entry name" value="COX2_CUA"/>
    <property type="match status" value="1"/>
</dbReference>
<dbReference type="PROSITE" id="PS50999">
    <property type="entry name" value="COX2_TM"/>
    <property type="match status" value="1"/>
</dbReference>
<protein>
    <recommendedName>
        <fullName>Cytochrome c oxidase subunit 2</fullName>
        <ecNumber>7.1.1.9</ecNumber>
    </recommendedName>
    <alternativeName>
        <fullName>Cytochrome c oxidase polypeptide II</fullName>
    </alternativeName>
</protein>
<accession>P50685</accession>
<evidence type="ECO:0000250" key="1">
    <source>
        <dbReference type="UniProtKB" id="P00403"/>
    </source>
</evidence>
<evidence type="ECO:0000250" key="2">
    <source>
        <dbReference type="UniProtKB" id="P00410"/>
    </source>
</evidence>
<evidence type="ECO:0000250" key="3">
    <source>
        <dbReference type="UniProtKB" id="P68530"/>
    </source>
</evidence>
<evidence type="ECO:0000305" key="4"/>
<name>COX2_CRABU</name>
<organism>
    <name type="scientific">Cratogeomys bursarius</name>
    <name type="common">Plains pocket gopher</name>
    <name type="synonym">Pappogeomys bursarius</name>
    <dbReference type="NCBI Taxonomy" id="37549"/>
    <lineage>
        <taxon>Eukaryota</taxon>
        <taxon>Metazoa</taxon>
        <taxon>Chordata</taxon>
        <taxon>Craniata</taxon>
        <taxon>Vertebrata</taxon>
        <taxon>Euteleostomi</taxon>
        <taxon>Mammalia</taxon>
        <taxon>Eutheria</taxon>
        <taxon>Euarchontoglires</taxon>
        <taxon>Glires</taxon>
        <taxon>Rodentia</taxon>
        <taxon>Castorimorpha</taxon>
        <taxon>Geomyidae</taxon>
        <taxon>Cratogeomys</taxon>
    </lineage>
</organism>